<evidence type="ECO:0000255" key="1">
    <source>
        <dbReference type="HAMAP-Rule" id="MF_00227"/>
    </source>
</evidence>
<feature type="chain" id="PRO_1000100367" description="Ribonuclease P protein component">
    <location>
        <begin position="1"/>
        <end position="119"/>
    </location>
</feature>
<organism>
    <name type="scientific">Klebsiella pneumoniae (strain 342)</name>
    <dbReference type="NCBI Taxonomy" id="507522"/>
    <lineage>
        <taxon>Bacteria</taxon>
        <taxon>Pseudomonadati</taxon>
        <taxon>Pseudomonadota</taxon>
        <taxon>Gammaproteobacteria</taxon>
        <taxon>Enterobacterales</taxon>
        <taxon>Enterobacteriaceae</taxon>
        <taxon>Klebsiella/Raoultella group</taxon>
        <taxon>Klebsiella</taxon>
        <taxon>Klebsiella pneumoniae complex</taxon>
    </lineage>
</organism>
<sequence length="119" mass="13824">MVKLAFPRELRLLTPSHFTFVFQQPQRAGTPQITILGRLNSLGHPRIGLTVAKKNVKRAHERNRIKRLTRESFRLRQHELPPMDFVVVAKRGVADLDNRALSEALEKLWRRHCRLARGS</sequence>
<keyword id="KW-0255">Endonuclease</keyword>
<keyword id="KW-0378">Hydrolase</keyword>
<keyword id="KW-0540">Nuclease</keyword>
<keyword id="KW-0694">RNA-binding</keyword>
<keyword id="KW-0819">tRNA processing</keyword>
<comment type="function">
    <text evidence="1">RNaseP catalyzes the removal of the 5'-leader sequence from pre-tRNA to produce the mature 5'-terminus. It can also cleave other RNA substrates such as 4.5S RNA. The protein component plays an auxiliary but essential role in vivo by binding to the 5'-leader sequence and broadening the substrate specificity of the ribozyme.</text>
</comment>
<comment type="catalytic activity">
    <reaction evidence="1">
        <text>Endonucleolytic cleavage of RNA, removing 5'-extranucleotides from tRNA precursor.</text>
        <dbReference type="EC" id="3.1.26.5"/>
    </reaction>
</comment>
<comment type="subunit">
    <text evidence="1">Consists of a catalytic RNA component (M1 or rnpB) and a protein subunit.</text>
</comment>
<comment type="similarity">
    <text evidence="1">Belongs to the RnpA family.</text>
</comment>
<dbReference type="EC" id="3.1.26.5" evidence="1"/>
<dbReference type="EMBL" id="CP000964">
    <property type="protein sequence ID" value="ACI07395.1"/>
    <property type="molecule type" value="Genomic_DNA"/>
</dbReference>
<dbReference type="SMR" id="B5XZP6"/>
<dbReference type="KEGG" id="kpe:KPK_5566"/>
<dbReference type="HOGENOM" id="CLU_117179_11_0_6"/>
<dbReference type="Proteomes" id="UP000001734">
    <property type="component" value="Chromosome"/>
</dbReference>
<dbReference type="GO" id="GO:0030677">
    <property type="term" value="C:ribonuclease P complex"/>
    <property type="evidence" value="ECO:0007669"/>
    <property type="project" value="TreeGrafter"/>
</dbReference>
<dbReference type="GO" id="GO:0042781">
    <property type="term" value="F:3'-tRNA processing endoribonuclease activity"/>
    <property type="evidence" value="ECO:0007669"/>
    <property type="project" value="TreeGrafter"/>
</dbReference>
<dbReference type="GO" id="GO:0004526">
    <property type="term" value="F:ribonuclease P activity"/>
    <property type="evidence" value="ECO:0007669"/>
    <property type="project" value="UniProtKB-UniRule"/>
</dbReference>
<dbReference type="GO" id="GO:0000049">
    <property type="term" value="F:tRNA binding"/>
    <property type="evidence" value="ECO:0007669"/>
    <property type="project" value="UniProtKB-UniRule"/>
</dbReference>
<dbReference type="GO" id="GO:0001682">
    <property type="term" value="P:tRNA 5'-leader removal"/>
    <property type="evidence" value="ECO:0007669"/>
    <property type="project" value="UniProtKB-UniRule"/>
</dbReference>
<dbReference type="FunFam" id="3.30.230.10:FF:000016">
    <property type="entry name" value="Ribonuclease P protein component"/>
    <property type="match status" value="1"/>
</dbReference>
<dbReference type="Gene3D" id="3.30.230.10">
    <property type="match status" value="1"/>
</dbReference>
<dbReference type="HAMAP" id="MF_00227">
    <property type="entry name" value="RNase_P"/>
    <property type="match status" value="1"/>
</dbReference>
<dbReference type="InterPro" id="IPR020568">
    <property type="entry name" value="Ribosomal_Su5_D2-typ_SF"/>
</dbReference>
<dbReference type="InterPro" id="IPR014721">
    <property type="entry name" value="Ribsml_uS5_D2-typ_fold_subgr"/>
</dbReference>
<dbReference type="InterPro" id="IPR000100">
    <property type="entry name" value="RNase_P"/>
</dbReference>
<dbReference type="InterPro" id="IPR020539">
    <property type="entry name" value="RNase_P_CS"/>
</dbReference>
<dbReference type="NCBIfam" id="TIGR00188">
    <property type="entry name" value="rnpA"/>
    <property type="match status" value="1"/>
</dbReference>
<dbReference type="PANTHER" id="PTHR33992">
    <property type="entry name" value="RIBONUCLEASE P PROTEIN COMPONENT"/>
    <property type="match status" value="1"/>
</dbReference>
<dbReference type="PANTHER" id="PTHR33992:SF1">
    <property type="entry name" value="RIBONUCLEASE P PROTEIN COMPONENT"/>
    <property type="match status" value="1"/>
</dbReference>
<dbReference type="Pfam" id="PF00825">
    <property type="entry name" value="Ribonuclease_P"/>
    <property type="match status" value="1"/>
</dbReference>
<dbReference type="SUPFAM" id="SSF54211">
    <property type="entry name" value="Ribosomal protein S5 domain 2-like"/>
    <property type="match status" value="1"/>
</dbReference>
<dbReference type="PROSITE" id="PS00648">
    <property type="entry name" value="RIBONUCLEASE_P"/>
    <property type="match status" value="1"/>
</dbReference>
<name>RNPA_KLEP3</name>
<reference key="1">
    <citation type="journal article" date="2008" name="PLoS Genet.">
        <title>Complete genome sequence of the N2-fixing broad host range endophyte Klebsiella pneumoniae 342 and virulence predictions verified in mice.</title>
        <authorList>
            <person name="Fouts D.E."/>
            <person name="Tyler H.L."/>
            <person name="DeBoy R.T."/>
            <person name="Daugherty S."/>
            <person name="Ren Q."/>
            <person name="Badger J.H."/>
            <person name="Durkin A.S."/>
            <person name="Huot H."/>
            <person name="Shrivastava S."/>
            <person name="Kothari S."/>
            <person name="Dodson R.J."/>
            <person name="Mohamoud Y."/>
            <person name="Khouri H."/>
            <person name="Roesch L.F.W."/>
            <person name="Krogfelt K.A."/>
            <person name="Struve C."/>
            <person name="Triplett E.W."/>
            <person name="Methe B.A."/>
        </authorList>
    </citation>
    <scope>NUCLEOTIDE SEQUENCE [LARGE SCALE GENOMIC DNA]</scope>
    <source>
        <strain>342</strain>
    </source>
</reference>
<protein>
    <recommendedName>
        <fullName evidence="1">Ribonuclease P protein component</fullName>
        <shortName evidence="1">RNase P protein</shortName>
        <shortName evidence="1">RNaseP protein</shortName>
        <ecNumber evidence="1">3.1.26.5</ecNumber>
    </recommendedName>
    <alternativeName>
        <fullName evidence="1">Protein C5</fullName>
    </alternativeName>
</protein>
<gene>
    <name evidence="1" type="primary">rnpA</name>
    <name type="ordered locus">KPK_5566</name>
</gene>
<accession>B5XZP6</accession>
<proteinExistence type="inferred from homology"/>